<comment type="function">
    <text evidence="1">Catalyzes the interconversion of beta-pyran and beta-furan forms of D-ribose.</text>
</comment>
<comment type="catalytic activity">
    <reaction evidence="1">
        <text>beta-D-ribopyranose = beta-D-ribofuranose</text>
        <dbReference type="Rhea" id="RHEA:25432"/>
        <dbReference type="ChEBI" id="CHEBI:27476"/>
        <dbReference type="ChEBI" id="CHEBI:47002"/>
        <dbReference type="EC" id="5.4.99.62"/>
    </reaction>
</comment>
<comment type="pathway">
    <text evidence="1">Carbohydrate metabolism; D-ribose degradation; D-ribose 5-phosphate from beta-D-ribopyranose: step 1/2.</text>
</comment>
<comment type="subunit">
    <text evidence="1">Homodecamer.</text>
</comment>
<comment type="subcellular location">
    <subcellularLocation>
        <location evidence="1">Cytoplasm</location>
    </subcellularLocation>
</comment>
<comment type="similarity">
    <text evidence="1">Belongs to the RbsD / FucU family. RbsD subfamily.</text>
</comment>
<protein>
    <recommendedName>
        <fullName evidence="1">D-ribose pyranase</fullName>
        <ecNumber evidence="1">5.4.99.62</ecNumber>
    </recommendedName>
</protein>
<feature type="chain" id="PRO_0000346303" description="D-ribose pyranase">
    <location>
        <begin position="1"/>
        <end position="139"/>
    </location>
</feature>
<feature type="active site" description="Proton donor" evidence="1">
    <location>
        <position position="20"/>
    </location>
</feature>
<feature type="binding site" evidence="1">
    <location>
        <position position="28"/>
    </location>
    <ligand>
        <name>substrate</name>
    </ligand>
</feature>
<feature type="binding site" evidence="1">
    <location>
        <position position="106"/>
    </location>
    <ligand>
        <name>substrate</name>
    </ligand>
</feature>
<feature type="binding site" evidence="1">
    <location>
        <begin position="128"/>
        <end position="130"/>
    </location>
    <ligand>
        <name>substrate</name>
    </ligand>
</feature>
<dbReference type="EC" id="5.4.99.62" evidence="1"/>
<dbReference type="EMBL" id="CP000901">
    <property type="protein sequence ID" value="ABX87354.1"/>
    <property type="molecule type" value="Genomic_DNA"/>
</dbReference>
<dbReference type="RefSeq" id="WP_002212252.1">
    <property type="nucleotide sequence ID" value="NZ_CP009935.1"/>
</dbReference>
<dbReference type="SMR" id="A9QYG7"/>
<dbReference type="GeneID" id="57974587"/>
<dbReference type="KEGG" id="ypg:YpAngola_A0007"/>
<dbReference type="PATRIC" id="fig|349746.12.peg.955"/>
<dbReference type="UniPathway" id="UPA00916">
    <property type="reaction ID" value="UER00888"/>
</dbReference>
<dbReference type="GO" id="GO:0005829">
    <property type="term" value="C:cytosol"/>
    <property type="evidence" value="ECO:0007669"/>
    <property type="project" value="TreeGrafter"/>
</dbReference>
<dbReference type="GO" id="GO:0062193">
    <property type="term" value="F:D-ribose pyranase activity"/>
    <property type="evidence" value="ECO:0007669"/>
    <property type="project" value="UniProtKB-EC"/>
</dbReference>
<dbReference type="GO" id="GO:0016872">
    <property type="term" value="F:intramolecular lyase activity"/>
    <property type="evidence" value="ECO:0007669"/>
    <property type="project" value="UniProtKB-UniRule"/>
</dbReference>
<dbReference type="GO" id="GO:0048029">
    <property type="term" value="F:monosaccharide binding"/>
    <property type="evidence" value="ECO:0007669"/>
    <property type="project" value="InterPro"/>
</dbReference>
<dbReference type="GO" id="GO:0019303">
    <property type="term" value="P:D-ribose catabolic process"/>
    <property type="evidence" value="ECO:0007669"/>
    <property type="project" value="UniProtKB-UniRule"/>
</dbReference>
<dbReference type="FunFam" id="3.40.1650.10:FF:000002">
    <property type="entry name" value="D-ribose pyranase"/>
    <property type="match status" value="1"/>
</dbReference>
<dbReference type="Gene3D" id="3.40.1650.10">
    <property type="entry name" value="RbsD-like domain"/>
    <property type="match status" value="1"/>
</dbReference>
<dbReference type="HAMAP" id="MF_01661">
    <property type="entry name" value="D_rib_pyranase"/>
    <property type="match status" value="1"/>
</dbReference>
<dbReference type="InterPro" id="IPR023064">
    <property type="entry name" value="D-ribose_pyranase"/>
</dbReference>
<dbReference type="InterPro" id="IPR023750">
    <property type="entry name" value="RbsD-like_sf"/>
</dbReference>
<dbReference type="InterPro" id="IPR007721">
    <property type="entry name" value="RbsD_FucU"/>
</dbReference>
<dbReference type="NCBIfam" id="NF008761">
    <property type="entry name" value="PRK11797.1"/>
    <property type="match status" value="1"/>
</dbReference>
<dbReference type="PANTHER" id="PTHR37831">
    <property type="entry name" value="D-RIBOSE PYRANASE"/>
    <property type="match status" value="1"/>
</dbReference>
<dbReference type="PANTHER" id="PTHR37831:SF1">
    <property type="entry name" value="D-RIBOSE PYRANASE"/>
    <property type="match status" value="1"/>
</dbReference>
<dbReference type="Pfam" id="PF05025">
    <property type="entry name" value="RbsD_FucU"/>
    <property type="match status" value="1"/>
</dbReference>
<dbReference type="SUPFAM" id="SSF102546">
    <property type="entry name" value="RbsD-like"/>
    <property type="match status" value="1"/>
</dbReference>
<evidence type="ECO:0000255" key="1">
    <source>
        <dbReference type="HAMAP-Rule" id="MF_01661"/>
    </source>
</evidence>
<name>RBSD_YERPG</name>
<organism>
    <name type="scientific">Yersinia pestis bv. Antiqua (strain Angola)</name>
    <dbReference type="NCBI Taxonomy" id="349746"/>
    <lineage>
        <taxon>Bacteria</taxon>
        <taxon>Pseudomonadati</taxon>
        <taxon>Pseudomonadota</taxon>
        <taxon>Gammaproteobacteria</taxon>
        <taxon>Enterobacterales</taxon>
        <taxon>Yersiniaceae</taxon>
        <taxon>Yersinia</taxon>
    </lineage>
</organism>
<sequence>MKKGVLLNADISAVISRLGHTDQIVIGDAGLPIPATTTRIDLALTRGVPGFLQVVDVVTQEMQVENAYLAEEIVKNNPQLHEALLVLLTQLEQRQENQIALRYISHEAFKEQTKQSRAVIRSGECSPFANIILGSGVTF</sequence>
<accession>A9QYG7</accession>
<reference key="1">
    <citation type="journal article" date="2010" name="J. Bacteriol.">
        <title>Genome sequence of the deep-rooted Yersinia pestis strain Angola reveals new insights into the evolution and pangenome of the plague bacterium.</title>
        <authorList>
            <person name="Eppinger M."/>
            <person name="Worsham P.L."/>
            <person name="Nikolich M.P."/>
            <person name="Riley D.R."/>
            <person name="Sebastian Y."/>
            <person name="Mou S."/>
            <person name="Achtman M."/>
            <person name="Lindler L.E."/>
            <person name="Ravel J."/>
        </authorList>
    </citation>
    <scope>NUCLEOTIDE SEQUENCE [LARGE SCALE GENOMIC DNA]</scope>
    <source>
        <strain>Angola</strain>
    </source>
</reference>
<gene>
    <name evidence="1" type="primary">rbsD</name>
    <name type="ordered locus">YpAngola_A0007</name>
</gene>
<keyword id="KW-0119">Carbohydrate metabolism</keyword>
<keyword id="KW-0963">Cytoplasm</keyword>
<keyword id="KW-0413">Isomerase</keyword>
<proteinExistence type="inferred from homology"/>